<feature type="chain" id="PRO_0000330538" description="Siroheme synthase">
    <location>
        <begin position="1"/>
        <end position="464"/>
    </location>
</feature>
<feature type="region of interest" description="Precorrin-2 dehydrogenase /sirohydrochlorin ferrochelatase" evidence="1">
    <location>
        <begin position="1"/>
        <end position="203"/>
    </location>
</feature>
<feature type="region of interest" description="Uroporphyrinogen-III C-methyltransferase" evidence="1">
    <location>
        <begin position="216"/>
        <end position="464"/>
    </location>
</feature>
<feature type="active site" description="Proton acceptor" evidence="1">
    <location>
        <position position="248"/>
    </location>
</feature>
<feature type="active site" description="Proton donor" evidence="1">
    <location>
        <position position="270"/>
    </location>
</feature>
<feature type="binding site" evidence="1">
    <location>
        <begin position="22"/>
        <end position="23"/>
    </location>
    <ligand>
        <name>NAD(+)</name>
        <dbReference type="ChEBI" id="CHEBI:57540"/>
    </ligand>
</feature>
<feature type="binding site" evidence="1">
    <location>
        <begin position="43"/>
        <end position="44"/>
    </location>
    <ligand>
        <name>NAD(+)</name>
        <dbReference type="ChEBI" id="CHEBI:57540"/>
    </ligand>
</feature>
<feature type="binding site" evidence="1">
    <location>
        <position position="225"/>
    </location>
    <ligand>
        <name>S-adenosyl-L-methionine</name>
        <dbReference type="ChEBI" id="CHEBI:59789"/>
    </ligand>
</feature>
<feature type="binding site" evidence="1">
    <location>
        <begin position="301"/>
        <end position="303"/>
    </location>
    <ligand>
        <name>S-adenosyl-L-methionine</name>
        <dbReference type="ChEBI" id="CHEBI:59789"/>
    </ligand>
</feature>
<feature type="binding site" evidence="1">
    <location>
        <position position="306"/>
    </location>
    <ligand>
        <name>S-adenosyl-L-methionine</name>
        <dbReference type="ChEBI" id="CHEBI:59789"/>
    </ligand>
</feature>
<feature type="binding site" evidence="1">
    <location>
        <begin position="331"/>
        <end position="332"/>
    </location>
    <ligand>
        <name>S-adenosyl-L-methionine</name>
        <dbReference type="ChEBI" id="CHEBI:59789"/>
    </ligand>
</feature>
<feature type="binding site" evidence="1">
    <location>
        <position position="383"/>
    </location>
    <ligand>
        <name>S-adenosyl-L-methionine</name>
        <dbReference type="ChEBI" id="CHEBI:59789"/>
    </ligand>
</feature>
<feature type="binding site" evidence="1">
    <location>
        <position position="412"/>
    </location>
    <ligand>
        <name>S-adenosyl-L-methionine</name>
        <dbReference type="ChEBI" id="CHEBI:59789"/>
    </ligand>
</feature>
<feature type="modified residue" description="Phosphoserine" evidence="1">
    <location>
        <position position="128"/>
    </location>
</feature>
<reference key="1">
    <citation type="journal article" date="2009" name="Genome Biol.">
        <title>Genomic and genetic analyses of diversity and plant interactions of Pseudomonas fluorescens.</title>
        <authorList>
            <person name="Silby M.W."/>
            <person name="Cerdeno-Tarraga A.M."/>
            <person name="Vernikos G.S."/>
            <person name="Giddens S.R."/>
            <person name="Jackson R.W."/>
            <person name="Preston G.M."/>
            <person name="Zhang X.-X."/>
            <person name="Moon C.D."/>
            <person name="Gehrig S.M."/>
            <person name="Godfrey S.A.C."/>
            <person name="Knight C.G."/>
            <person name="Malone J.G."/>
            <person name="Robinson Z."/>
            <person name="Spiers A.J."/>
            <person name="Harris S."/>
            <person name="Challis G.L."/>
            <person name="Yaxley A.M."/>
            <person name="Harris D."/>
            <person name="Seeger K."/>
            <person name="Murphy L."/>
            <person name="Rutter S."/>
            <person name="Squares R."/>
            <person name="Quail M.A."/>
            <person name="Saunders E."/>
            <person name="Mavromatis K."/>
            <person name="Brettin T.S."/>
            <person name="Bentley S.D."/>
            <person name="Hothersall J."/>
            <person name="Stephens E."/>
            <person name="Thomas C.M."/>
            <person name="Parkhill J."/>
            <person name="Levy S.B."/>
            <person name="Rainey P.B."/>
            <person name="Thomson N.R."/>
        </authorList>
    </citation>
    <scope>NUCLEOTIDE SEQUENCE [LARGE SCALE GENOMIC DNA]</scope>
    <source>
        <strain>Pf0-1</strain>
    </source>
</reference>
<comment type="function">
    <text evidence="1">Multifunctional enzyme that catalyzes the SAM-dependent methylations of uroporphyrinogen III at position C-2 and C-7 to form precorrin-2 via precorrin-1. Then it catalyzes the NAD-dependent ring dehydrogenation of precorrin-2 to yield sirohydrochlorin. Finally, it catalyzes the ferrochelation of sirohydrochlorin to yield siroheme.</text>
</comment>
<comment type="catalytic activity">
    <reaction evidence="1">
        <text>uroporphyrinogen III + 2 S-adenosyl-L-methionine = precorrin-2 + 2 S-adenosyl-L-homocysteine + H(+)</text>
        <dbReference type="Rhea" id="RHEA:32459"/>
        <dbReference type="ChEBI" id="CHEBI:15378"/>
        <dbReference type="ChEBI" id="CHEBI:57308"/>
        <dbReference type="ChEBI" id="CHEBI:57856"/>
        <dbReference type="ChEBI" id="CHEBI:58827"/>
        <dbReference type="ChEBI" id="CHEBI:59789"/>
        <dbReference type="EC" id="2.1.1.107"/>
    </reaction>
</comment>
<comment type="catalytic activity">
    <reaction evidence="1">
        <text>precorrin-2 + NAD(+) = sirohydrochlorin + NADH + 2 H(+)</text>
        <dbReference type="Rhea" id="RHEA:15613"/>
        <dbReference type="ChEBI" id="CHEBI:15378"/>
        <dbReference type="ChEBI" id="CHEBI:57540"/>
        <dbReference type="ChEBI" id="CHEBI:57945"/>
        <dbReference type="ChEBI" id="CHEBI:58351"/>
        <dbReference type="ChEBI" id="CHEBI:58827"/>
        <dbReference type="EC" id="1.3.1.76"/>
    </reaction>
</comment>
<comment type="catalytic activity">
    <reaction evidence="1">
        <text>siroheme + 2 H(+) = sirohydrochlorin + Fe(2+)</text>
        <dbReference type="Rhea" id="RHEA:24360"/>
        <dbReference type="ChEBI" id="CHEBI:15378"/>
        <dbReference type="ChEBI" id="CHEBI:29033"/>
        <dbReference type="ChEBI" id="CHEBI:58351"/>
        <dbReference type="ChEBI" id="CHEBI:60052"/>
        <dbReference type="EC" id="4.99.1.4"/>
    </reaction>
</comment>
<comment type="pathway">
    <text evidence="1">Cofactor biosynthesis; adenosylcobalamin biosynthesis; precorrin-2 from uroporphyrinogen III: step 1/1.</text>
</comment>
<comment type="pathway">
    <text evidence="1">Cofactor biosynthesis; adenosylcobalamin biosynthesis; sirohydrochlorin from precorrin-2: step 1/1.</text>
</comment>
<comment type="pathway">
    <text evidence="1">Porphyrin-containing compound metabolism; siroheme biosynthesis; precorrin-2 from uroporphyrinogen III: step 1/1.</text>
</comment>
<comment type="pathway">
    <text evidence="1">Porphyrin-containing compound metabolism; siroheme biosynthesis; siroheme from sirohydrochlorin: step 1/1.</text>
</comment>
<comment type="pathway">
    <text evidence="1">Porphyrin-containing compound metabolism; siroheme biosynthesis; sirohydrochlorin from precorrin-2: step 1/1.</text>
</comment>
<comment type="similarity">
    <text evidence="1">In the N-terminal section; belongs to the precorrin-2 dehydrogenase / sirohydrochlorin ferrochelatase family.</text>
</comment>
<comment type="similarity">
    <text evidence="1">In the C-terminal section; belongs to the precorrin methyltransferase family.</text>
</comment>
<organism>
    <name type="scientific">Pseudomonas fluorescens (strain Pf0-1)</name>
    <dbReference type="NCBI Taxonomy" id="205922"/>
    <lineage>
        <taxon>Bacteria</taxon>
        <taxon>Pseudomonadati</taxon>
        <taxon>Pseudomonadota</taxon>
        <taxon>Gammaproteobacteria</taxon>
        <taxon>Pseudomonadales</taxon>
        <taxon>Pseudomonadaceae</taxon>
        <taxon>Pseudomonas</taxon>
    </lineage>
</organism>
<sequence length="464" mass="49875">MKYLPLFHNLRGSRVLVVGGGEIALRKSRLLADAGALLRVVAPEIEAQLRELVAASGGECLLRGYAEADLDGCGLIIAATDDEALNAHVSADAHRRCVPVNVVDAPALCSVIFPAIVDRSPLIIAVSSGGDAPVLARLIRAKIETWIPSTYGHLAGLAARFRDQVKGLFPDVQQRRGFWEDVFQGPIADRQLAGQGAEAERLLQAKIDGEAMVTTGEVYLVGAGPGDPDLLTFRALRLMQQADVVLYDRLVAPAILELCRRDAERVYVGKRRADHAVPQDQINQQLVDLAKAGKRVVRLKGGDPFIFGRGGEEIEELAAHGIPFQVVPGITAASGCAAYAGIPLTHRDYAQSVRFVTGHLKDGSTDLPWSDLVAPAQTLVFYMGLVGLPIICEQLIKHGRAAETPAALIQQGTTVNQRVFTGTLADLPRLVAEHEVHAPTLVIVGEVVQLREKLAWFEGAQGQI</sequence>
<dbReference type="EC" id="2.1.1.107" evidence="1"/>
<dbReference type="EC" id="1.3.1.76" evidence="1"/>
<dbReference type="EC" id="4.99.1.4" evidence="1"/>
<dbReference type="EMBL" id="CP000094">
    <property type="protein sequence ID" value="ABA75319.1"/>
    <property type="molecule type" value="Genomic_DNA"/>
</dbReference>
<dbReference type="RefSeq" id="WP_011334941.1">
    <property type="nucleotide sequence ID" value="NC_007492.2"/>
</dbReference>
<dbReference type="SMR" id="Q3KA85"/>
<dbReference type="KEGG" id="pfo:Pfl01_3581"/>
<dbReference type="eggNOG" id="COG0007">
    <property type="taxonomic scope" value="Bacteria"/>
</dbReference>
<dbReference type="eggNOG" id="COG1648">
    <property type="taxonomic scope" value="Bacteria"/>
</dbReference>
<dbReference type="HOGENOM" id="CLU_011276_2_1_6"/>
<dbReference type="UniPathway" id="UPA00148">
    <property type="reaction ID" value="UER00211"/>
</dbReference>
<dbReference type="UniPathway" id="UPA00148">
    <property type="reaction ID" value="UER00222"/>
</dbReference>
<dbReference type="UniPathway" id="UPA00262">
    <property type="reaction ID" value="UER00211"/>
</dbReference>
<dbReference type="UniPathway" id="UPA00262">
    <property type="reaction ID" value="UER00222"/>
</dbReference>
<dbReference type="UniPathway" id="UPA00262">
    <property type="reaction ID" value="UER00376"/>
</dbReference>
<dbReference type="Proteomes" id="UP000002704">
    <property type="component" value="Chromosome"/>
</dbReference>
<dbReference type="GO" id="GO:0051287">
    <property type="term" value="F:NAD binding"/>
    <property type="evidence" value="ECO:0007669"/>
    <property type="project" value="InterPro"/>
</dbReference>
<dbReference type="GO" id="GO:0043115">
    <property type="term" value="F:precorrin-2 dehydrogenase activity"/>
    <property type="evidence" value="ECO:0007669"/>
    <property type="project" value="UniProtKB-UniRule"/>
</dbReference>
<dbReference type="GO" id="GO:0051266">
    <property type="term" value="F:sirohydrochlorin ferrochelatase activity"/>
    <property type="evidence" value="ECO:0007669"/>
    <property type="project" value="UniProtKB-EC"/>
</dbReference>
<dbReference type="GO" id="GO:0004851">
    <property type="term" value="F:uroporphyrin-III C-methyltransferase activity"/>
    <property type="evidence" value="ECO:0007669"/>
    <property type="project" value="UniProtKB-UniRule"/>
</dbReference>
<dbReference type="GO" id="GO:0009236">
    <property type="term" value="P:cobalamin biosynthetic process"/>
    <property type="evidence" value="ECO:0007669"/>
    <property type="project" value="UniProtKB-UniRule"/>
</dbReference>
<dbReference type="GO" id="GO:0032259">
    <property type="term" value="P:methylation"/>
    <property type="evidence" value="ECO:0007669"/>
    <property type="project" value="UniProtKB-KW"/>
</dbReference>
<dbReference type="GO" id="GO:0019354">
    <property type="term" value="P:siroheme biosynthetic process"/>
    <property type="evidence" value="ECO:0007669"/>
    <property type="project" value="UniProtKB-UniRule"/>
</dbReference>
<dbReference type="CDD" id="cd11642">
    <property type="entry name" value="SUMT"/>
    <property type="match status" value="1"/>
</dbReference>
<dbReference type="FunFam" id="3.30.160.110:FF:000001">
    <property type="entry name" value="Siroheme synthase"/>
    <property type="match status" value="1"/>
</dbReference>
<dbReference type="FunFam" id="3.30.950.10:FF:000001">
    <property type="entry name" value="Siroheme synthase"/>
    <property type="match status" value="1"/>
</dbReference>
<dbReference type="FunFam" id="3.40.1010.10:FF:000001">
    <property type="entry name" value="Siroheme synthase"/>
    <property type="match status" value="1"/>
</dbReference>
<dbReference type="Gene3D" id="3.40.1010.10">
    <property type="entry name" value="Cobalt-precorrin-4 Transmethylase, Domain 1"/>
    <property type="match status" value="1"/>
</dbReference>
<dbReference type="Gene3D" id="3.30.950.10">
    <property type="entry name" value="Methyltransferase, Cobalt-precorrin-4 Transmethylase, Domain 2"/>
    <property type="match status" value="1"/>
</dbReference>
<dbReference type="Gene3D" id="3.40.50.720">
    <property type="entry name" value="NAD(P)-binding Rossmann-like Domain"/>
    <property type="match status" value="1"/>
</dbReference>
<dbReference type="Gene3D" id="1.10.8.210">
    <property type="entry name" value="Sirohaem synthase, dimerisation domain"/>
    <property type="match status" value="1"/>
</dbReference>
<dbReference type="Gene3D" id="3.30.160.110">
    <property type="entry name" value="Siroheme synthase, domain 2"/>
    <property type="match status" value="1"/>
</dbReference>
<dbReference type="HAMAP" id="MF_01646">
    <property type="entry name" value="Siroheme_synth"/>
    <property type="match status" value="1"/>
</dbReference>
<dbReference type="InterPro" id="IPR000878">
    <property type="entry name" value="4pyrrol_Mease"/>
</dbReference>
<dbReference type="InterPro" id="IPR035996">
    <property type="entry name" value="4pyrrol_Methylase_sf"/>
</dbReference>
<dbReference type="InterPro" id="IPR014777">
    <property type="entry name" value="4pyrrole_Mease_sub1"/>
</dbReference>
<dbReference type="InterPro" id="IPR014776">
    <property type="entry name" value="4pyrrole_Mease_sub2"/>
</dbReference>
<dbReference type="InterPro" id="IPR006366">
    <property type="entry name" value="CobA/CysG_C"/>
</dbReference>
<dbReference type="InterPro" id="IPR036291">
    <property type="entry name" value="NAD(P)-bd_dom_sf"/>
</dbReference>
<dbReference type="InterPro" id="IPR050161">
    <property type="entry name" value="Siro_Cobalamin_biosynth"/>
</dbReference>
<dbReference type="InterPro" id="IPR037115">
    <property type="entry name" value="Sirohaem_synt_dimer_dom_sf"/>
</dbReference>
<dbReference type="InterPro" id="IPR012409">
    <property type="entry name" value="Sirohaem_synth"/>
</dbReference>
<dbReference type="InterPro" id="IPR028281">
    <property type="entry name" value="Sirohaem_synthase_central"/>
</dbReference>
<dbReference type="InterPro" id="IPR019478">
    <property type="entry name" value="Sirohaem_synthase_dimer_dom"/>
</dbReference>
<dbReference type="InterPro" id="IPR006367">
    <property type="entry name" value="Sirohaem_synthase_N"/>
</dbReference>
<dbReference type="InterPro" id="IPR003043">
    <property type="entry name" value="Uropor_MeTrfase_CS"/>
</dbReference>
<dbReference type="NCBIfam" id="TIGR01469">
    <property type="entry name" value="cobA_cysG_Cterm"/>
    <property type="match status" value="1"/>
</dbReference>
<dbReference type="NCBIfam" id="TIGR01470">
    <property type="entry name" value="cysG_Nterm"/>
    <property type="match status" value="1"/>
</dbReference>
<dbReference type="NCBIfam" id="NF004790">
    <property type="entry name" value="PRK06136.1"/>
    <property type="match status" value="1"/>
</dbReference>
<dbReference type="NCBIfam" id="NF007922">
    <property type="entry name" value="PRK10637.1"/>
    <property type="match status" value="1"/>
</dbReference>
<dbReference type="PANTHER" id="PTHR45790:SF1">
    <property type="entry name" value="SIROHEME SYNTHASE"/>
    <property type="match status" value="1"/>
</dbReference>
<dbReference type="PANTHER" id="PTHR45790">
    <property type="entry name" value="SIROHEME SYNTHASE-RELATED"/>
    <property type="match status" value="1"/>
</dbReference>
<dbReference type="Pfam" id="PF10414">
    <property type="entry name" value="CysG_dimeriser"/>
    <property type="match status" value="1"/>
</dbReference>
<dbReference type="Pfam" id="PF13241">
    <property type="entry name" value="NAD_binding_7"/>
    <property type="match status" value="1"/>
</dbReference>
<dbReference type="Pfam" id="PF14824">
    <property type="entry name" value="Sirohm_synth_M"/>
    <property type="match status" value="1"/>
</dbReference>
<dbReference type="Pfam" id="PF00590">
    <property type="entry name" value="TP_methylase"/>
    <property type="match status" value="1"/>
</dbReference>
<dbReference type="PIRSF" id="PIRSF036426">
    <property type="entry name" value="Sirohaem_synth"/>
    <property type="match status" value="1"/>
</dbReference>
<dbReference type="SUPFAM" id="SSF51735">
    <property type="entry name" value="NAD(P)-binding Rossmann-fold domains"/>
    <property type="match status" value="1"/>
</dbReference>
<dbReference type="SUPFAM" id="SSF75615">
    <property type="entry name" value="Siroheme synthase middle domains-like"/>
    <property type="match status" value="1"/>
</dbReference>
<dbReference type="SUPFAM" id="SSF53790">
    <property type="entry name" value="Tetrapyrrole methylase"/>
    <property type="match status" value="1"/>
</dbReference>
<dbReference type="PROSITE" id="PS00840">
    <property type="entry name" value="SUMT_2"/>
    <property type="match status" value="1"/>
</dbReference>
<name>CYSG_PSEPF</name>
<proteinExistence type="inferred from homology"/>
<protein>
    <recommendedName>
        <fullName evidence="1">Siroheme synthase</fullName>
    </recommendedName>
    <domain>
        <recommendedName>
            <fullName evidence="1">Uroporphyrinogen-III C-methyltransferase</fullName>
            <shortName evidence="1">Urogen III methylase</shortName>
            <ecNumber evidence="1">2.1.1.107</ecNumber>
        </recommendedName>
        <alternativeName>
            <fullName evidence="1">SUMT</fullName>
        </alternativeName>
        <alternativeName>
            <fullName evidence="1">Uroporphyrinogen III methylase</fullName>
            <shortName evidence="1">UROM</shortName>
        </alternativeName>
    </domain>
    <domain>
        <recommendedName>
            <fullName evidence="1">Precorrin-2 dehydrogenase</fullName>
            <ecNumber evidence="1">1.3.1.76</ecNumber>
        </recommendedName>
    </domain>
    <domain>
        <recommendedName>
            <fullName evidence="1">Sirohydrochlorin ferrochelatase</fullName>
            <ecNumber evidence="1">4.99.1.4</ecNumber>
        </recommendedName>
    </domain>
</protein>
<accession>Q3KA85</accession>
<keyword id="KW-0169">Cobalamin biosynthesis</keyword>
<keyword id="KW-0456">Lyase</keyword>
<keyword id="KW-0489">Methyltransferase</keyword>
<keyword id="KW-0511">Multifunctional enzyme</keyword>
<keyword id="KW-0520">NAD</keyword>
<keyword id="KW-0560">Oxidoreductase</keyword>
<keyword id="KW-0597">Phosphoprotein</keyword>
<keyword id="KW-0627">Porphyrin biosynthesis</keyword>
<keyword id="KW-0949">S-adenosyl-L-methionine</keyword>
<keyword id="KW-0808">Transferase</keyword>
<evidence type="ECO:0000255" key="1">
    <source>
        <dbReference type="HAMAP-Rule" id="MF_01646"/>
    </source>
</evidence>
<gene>
    <name evidence="1" type="primary">cysG</name>
    <name type="ordered locus">Pfl01_3581</name>
</gene>